<evidence type="ECO:0000255" key="1">
    <source>
        <dbReference type="HAMAP-Rule" id="MF_00294"/>
    </source>
</evidence>
<evidence type="ECO:0000305" key="2"/>
<sequence>MRVGVTLACTECKRRNYTTAKNKKNDPNRIELKKYCKWCHTHTVHKETR</sequence>
<name>RL33_DESRM</name>
<keyword id="KW-1185">Reference proteome</keyword>
<keyword id="KW-0687">Ribonucleoprotein</keyword>
<keyword id="KW-0689">Ribosomal protein</keyword>
<reference key="1">
    <citation type="submission" date="2007-03" db="EMBL/GenBank/DDBJ databases">
        <title>Complete sequence of Desulfotomaculum reducens MI-1.</title>
        <authorList>
            <consortium name="US DOE Joint Genome Institute"/>
            <person name="Copeland A."/>
            <person name="Lucas S."/>
            <person name="Lapidus A."/>
            <person name="Barry K."/>
            <person name="Detter J.C."/>
            <person name="Glavina del Rio T."/>
            <person name="Hammon N."/>
            <person name="Israni S."/>
            <person name="Dalin E."/>
            <person name="Tice H."/>
            <person name="Pitluck S."/>
            <person name="Sims D."/>
            <person name="Brettin T."/>
            <person name="Bruce D."/>
            <person name="Han C."/>
            <person name="Tapia R."/>
            <person name="Schmutz J."/>
            <person name="Larimer F."/>
            <person name="Land M."/>
            <person name="Hauser L."/>
            <person name="Kyrpides N."/>
            <person name="Kim E."/>
            <person name="Tebo B.M."/>
            <person name="Richardson P."/>
        </authorList>
    </citation>
    <scope>NUCLEOTIDE SEQUENCE [LARGE SCALE GENOMIC DNA]</scope>
    <source>
        <strain>ATCC BAA-1160 / DSM 100696 / MI-1</strain>
    </source>
</reference>
<organism>
    <name type="scientific">Desulforamulus reducens (strain ATCC BAA-1160 / DSM 100696 / MI-1)</name>
    <name type="common">Desulfotomaculum reducens</name>
    <dbReference type="NCBI Taxonomy" id="349161"/>
    <lineage>
        <taxon>Bacteria</taxon>
        <taxon>Bacillati</taxon>
        <taxon>Bacillota</taxon>
        <taxon>Clostridia</taxon>
        <taxon>Eubacteriales</taxon>
        <taxon>Peptococcaceae</taxon>
        <taxon>Desulforamulus</taxon>
    </lineage>
</organism>
<gene>
    <name evidence="1" type="primary">rpmG</name>
    <name type="ordered locus">Dred_0200</name>
</gene>
<comment type="similarity">
    <text evidence="1">Belongs to the bacterial ribosomal protein bL33 family.</text>
</comment>
<proteinExistence type="inferred from homology"/>
<protein>
    <recommendedName>
        <fullName evidence="1">Large ribosomal subunit protein bL33</fullName>
    </recommendedName>
    <alternativeName>
        <fullName evidence="2">50S ribosomal protein L33</fullName>
    </alternativeName>
</protein>
<dbReference type="EMBL" id="CP000612">
    <property type="protein sequence ID" value="ABO48749.1"/>
    <property type="molecule type" value="Genomic_DNA"/>
</dbReference>
<dbReference type="RefSeq" id="WP_011876590.1">
    <property type="nucleotide sequence ID" value="NC_009253.1"/>
</dbReference>
<dbReference type="SMR" id="A4J0Z6"/>
<dbReference type="STRING" id="349161.Dred_0200"/>
<dbReference type="KEGG" id="drm:Dred_0200"/>
<dbReference type="eggNOG" id="COG0267">
    <property type="taxonomic scope" value="Bacteria"/>
</dbReference>
<dbReference type="HOGENOM" id="CLU_190949_0_2_9"/>
<dbReference type="OrthoDB" id="9801333at2"/>
<dbReference type="Proteomes" id="UP000001556">
    <property type="component" value="Chromosome"/>
</dbReference>
<dbReference type="GO" id="GO:0005737">
    <property type="term" value="C:cytoplasm"/>
    <property type="evidence" value="ECO:0007669"/>
    <property type="project" value="UniProtKB-ARBA"/>
</dbReference>
<dbReference type="GO" id="GO:1990904">
    <property type="term" value="C:ribonucleoprotein complex"/>
    <property type="evidence" value="ECO:0007669"/>
    <property type="project" value="UniProtKB-KW"/>
</dbReference>
<dbReference type="GO" id="GO:0005840">
    <property type="term" value="C:ribosome"/>
    <property type="evidence" value="ECO:0007669"/>
    <property type="project" value="UniProtKB-KW"/>
</dbReference>
<dbReference type="GO" id="GO:0003735">
    <property type="term" value="F:structural constituent of ribosome"/>
    <property type="evidence" value="ECO:0007669"/>
    <property type="project" value="InterPro"/>
</dbReference>
<dbReference type="GO" id="GO:0006412">
    <property type="term" value="P:translation"/>
    <property type="evidence" value="ECO:0007669"/>
    <property type="project" value="UniProtKB-UniRule"/>
</dbReference>
<dbReference type="Gene3D" id="2.20.28.120">
    <property type="entry name" value="Ribosomal protein L33"/>
    <property type="match status" value="1"/>
</dbReference>
<dbReference type="HAMAP" id="MF_00294">
    <property type="entry name" value="Ribosomal_bL33"/>
    <property type="match status" value="1"/>
</dbReference>
<dbReference type="InterPro" id="IPR001705">
    <property type="entry name" value="Ribosomal_bL33"/>
</dbReference>
<dbReference type="InterPro" id="IPR018264">
    <property type="entry name" value="Ribosomal_bL33_CS"/>
</dbReference>
<dbReference type="InterPro" id="IPR038584">
    <property type="entry name" value="Ribosomal_bL33_sf"/>
</dbReference>
<dbReference type="InterPro" id="IPR011332">
    <property type="entry name" value="Ribosomal_zn-bd"/>
</dbReference>
<dbReference type="NCBIfam" id="NF001764">
    <property type="entry name" value="PRK00504.1"/>
    <property type="match status" value="1"/>
</dbReference>
<dbReference type="NCBIfam" id="NF001860">
    <property type="entry name" value="PRK00595.1"/>
    <property type="match status" value="1"/>
</dbReference>
<dbReference type="NCBIfam" id="TIGR01023">
    <property type="entry name" value="rpmG_bact"/>
    <property type="match status" value="1"/>
</dbReference>
<dbReference type="PANTHER" id="PTHR43168">
    <property type="entry name" value="50S RIBOSOMAL PROTEIN L33, CHLOROPLASTIC"/>
    <property type="match status" value="1"/>
</dbReference>
<dbReference type="PANTHER" id="PTHR43168:SF2">
    <property type="entry name" value="LARGE RIBOSOMAL SUBUNIT PROTEIN BL33C"/>
    <property type="match status" value="1"/>
</dbReference>
<dbReference type="Pfam" id="PF00471">
    <property type="entry name" value="Ribosomal_L33"/>
    <property type="match status" value="1"/>
</dbReference>
<dbReference type="SUPFAM" id="SSF57829">
    <property type="entry name" value="Zn-binding ribosomal proteins"/>
    <property type="match status" value="1"/>
</dbReference>
<dbReference type="PROSITE" id="PS00582">
    <property type="entry name" value="RIBOSOMAL_L33"/>
    <property type="match status" value="1"/>
</dbReference>
<accession>A4J0Z6</accession>
<feature type="chain" id="PRO_0000356449" description="Large ribosomal subunit protein bL33">
    <location>
        <begin position="1"/>
        <end position="49"/>
    </location>
</feature>